<comment type="catalytic activity">
    <reaction evidence="1">
        <text>tRNA(Cys) + L-cysteine + ATP = L-cysteinyl-tRNA(Cys) + AMP + diphosphate</text>
        <dbReference type="Rhea" id="RHEA:17773"/>
        <dbReference type="Rhea" id="RHEA-COMP:9661"/>
        <dbReference type="Rhea" id="RHEA-COMP:9679"/>
        <dbReference type="ChEBI" id="CHEBI:30616"/>
        <dbReference type="ChEBI" id="CHEBI:33019"/>
        <dbReference type="ChEBI" id="CHEBI:35235"/>
        <dbReference type="ChEBI" id="CHEBI:78442"/>
        <dbReference type="ChEBI" id="CHEBI:78517"/>
        <dbReference type="ChEBI" id="CHEBI:456215"/>
        <dbReference type="EC" id="6.1.1.16"/>
    </reaction>
</comment>
<comment type="cofactor">
    <cofactor evidence="1">
        <name>Zn(2+)</name>
        <dbReference type="ChEBI" id="CHEBI:29105"/>
    </cofactor>
    <text evidence="1">Binds 1 zinc ion per subunit.</text>
</comment>
<comment type="subunit">
    <text evidence="1">Monomer.</text>
</comment>
<comment type="subcellular location">
    <subcellularLocation>
        <location evidence="1">Cytoplasm</location>
    </subcellularLocation>
</comment>
<comment type="similarity">
    <text evidence="1">Belongs to the class-I aminoacyl-tRNA synthetase family.</text>
</comment>
<organism>
    <name type="scientific">Tolumonas auensis (strain DSM 9187 / NBRC 110442 / TA 4)</name>
    <dbReference type="NCBI Taxonomy" id="595494"/>
    <lineage>
        <taxon>Bacteria</taxon>
        <taxon>Pseudomonadati</taxon>
        <taxon>Pseudomonadota</taxon>
        <taxon>Gammaproteobacteria</taxon>
        <taxon>Aeromonadales</taxon>
        <taxon>Aeromonadaceae</taxon>
        <taxon>Tolumonas</taxon>
    </lineage>
</organism>
<name>SYC_TOLAT</name>
<dbReference type="EC" id="6.1.1.16" evidence="1"/>
<dbReference type="EMBL" id="CP001616">
    <property type="protein sequence ID" value="ACQ93521.1"/>
    <property type="molecule type" value="Genomic_DNA"/>
</dbReference>
<dbReference type="RefSeq" id="WP_015878989.1">
    <property type="nucleotide sequence ID" value="NC_012691.1"/>
</dbReference>
<dbReference type="SMR" id="C4LG04"/>
<dbReference type="STRING" id="595494.Tola_1918"/>
<dbReference type="KEGG" id="tau:Tola_1918"/>
<dbReference type="eggNOG" id="COG0215">
    <property type="taxonomic scope" value="Bacteria"/>
</dbReference>
<dbReference type="HOGENOM" id="CLU_013528_0_1_6"/>
<dbReference type="OrthoDB" id="9815130at2"/>
<dbReference type="Proteomes" id="UP000009073">
    <property type="component" value="Chromosome"/>
</dbReference>
<dbReference type="GO" id="GO:0005829">
    <property type="term" value="C:cytosol"/>
    <property type="evidence" value="ECO:0007669"/>
    <property type="project" value="TreeGrafter"/>
</dbReference>
<dbReference type="GO" id="GO:0005524">
    <property type="term" value="F:ATP binding"/>
    <property type="evidence" value="ECO:0007669"/>
    <property type="project" value="UniProtKB-UniRule"/>
</dbReference>
<dbReference type="GO" id="GO:0004817">
    <property type="term" value="F:cysteine-tRNA ligase activity"/>
    <property type="evidence" value="ECO:0007669"/>
    <property type="project" value="UniProtKB-UniRule"/>
</dbReference>
<dbReference type="GO" id="GO:0008270">
    <property type="term" value="F:zinc ion binding"/>
    <property type="evidence" value="ECO:0007669"/>
    <property type="project" value="UniProtKB-UniRule"/>
</dbReference>
<dbReference type="GO" id="GO:0006423">
    <property type="term" value="P:cysteinyl-tRNA aminoacylation"/>
    <property type="evidence" value="ECO:0007669"/>
    <property type="project" value="UniProtKB-UniRule"/>
</dbReference>
<dbReference type="CDD" id="cd07963">
    <property type="entry name" value="Anticodon_Ia_Cys"/>
    <property type="match status" value="1"/>
</dbReference>
<dbReference type="CDD" id="cd00672">
    <property type="entry name" value="CysRS_core"/>
    <property type="match status" value="1"/>
</dbReference>
<dbReference type="FunFam" id="3.40.50.620:FF:000009">
    <property type="entry name" value="Cysteine--tRNA ligase"/>
    <property type="match status" value="1"/>
</dbReference>
<dbReference type="Gene3D" id="1.20.120.1910">
    <property type="entry name" value="Cysteine-tRNA ligase, C-terminal anti-codon recognition domain"/>
    <property type="match status" value="1"/>
</dbReference>
<dbReference type="Gene3D" id="3.40.50.620">
    <property type="entry name" value="HUPs"/>
    <property type="match status" value="1"/>
</dbReference>
<dbReference type="HAMAP" id="MF_00041">
    <property type="entry name" value="Cys_tRNA_synth"/>
    <property type="match status" value="1"/>
</dbReference>
<dbReference type="InterPro" id="IPR015803">
    <property type="entry name" value="Cys-tRNA-ligase"/>
</dbReference>
<dbReference type="InterPro" id="IPR015273">
    <property type="entry name" value="Cys-tRNA-synt_Ia_DALR"/>
</dbReference>
<dbReference type="InterPro" id="IPR024909">
    <property type="entry name" value="Cys-tRNA/MSH_ligase"/>
</dbReference>
<dbReference type="InterPro" id="IPR056411">
    <property type="entry name" value="CysS_C"/>
</dbReference>
<dbReference type="InterPro" id="IPR014729">
    <property type="entry name" value="Rossmann-like_a/b/a_fold"/>
</dbReference>
<dbReference type="InterPro" id="IPR032678">
    <property type="entry name" value="tRNA-synt_1_cat_dom"/>
</dbReference>
<dbReference type="InterPro" id="IPR009080">
    <property type="entry name" value="tRNAsynth_Ia_anticodon-bd"/>
</dbReference>
<dbReference type="NCBIfam" id="TIGR00435">
    <property type="entry name" value="cysS"/>
    <property type="match status" value="1"/>
</dbReference>
<dbReference type="PANTHER" id="PTHR10890:SF3">
    <property type="entry name" value="CYSTEINE--TRNA LIGASE, CYTOPLASMIC"/>
    <property type="match status" value="1"/>
</dbReference>
<dbReference type="PANTHER" id="PTHR10890">
    <property type="entry name" value="CYSTEINYL-TRNA SYNTHETASE"/>
    <property type="match status" value="1"/>
</dbReference>
<dbReference type="Pfam" id="PF23493">
    <property type="entry name" value="CysS_C"/>
    <property type="match status" value="1"/>
</dbReference>
<dbReference type="Pfam" id="PF09190">
    <property type="entry name" value="DALR_2"/>
    <property type="match status" value="1"/>
</dbReference>
<dbReference type="Pfam" id="PF01406">
    <property type="entry name" value="tRNA-synt_1e"/>
    <property type="match status" value="1"/>
</dbReference>
<dbReference type="PRINTS" id="PR00983">
    <property type="entry name" value="TRNASYNTHCYS"/>
</dbReference>
<dbReference type="SMART" id="SM00840">
    <property type="entry name" value="DALR_2"/>
    <property type="match status" value="1"/>
</dbReference>
<dbReference type="SUPFAM" id="SSF47323">
    <property type="entry name" value="Anticodon-binding domain of a subclass of class I aminoacyl-tRNA synthetases"/>
    <property type="match status" value="1"/>
</dbReference>
<dbReference type="SUPFAM" id="SSF52374">
    <property type="entry name" value="Nucleotidylyl transferase"/>
    <property type="match status" value="1"/>
</dbReference>
<protein>
    <recommendedName>
        <fullName evidence="1">Cysteine--tRNA ligase</fullName>
        <ecNumber evidence="1">6.1.1.16</ecNumber>
    </recommendedName>
    <alternativeName>
        <fullName evidence="1">Cysteinyl-tRNA synthetase</fullName>
        <shortName evidence="1">CysRS</shortName>
    </alternativeName>
</protein>
<keyword id="KW-0030">Aminoacyl-tRNA synthetase</keyword>
<keyword id="KW-0067">ATP-binding</keyword>
<keyword id="KW-0963">Cytoplasm</keyword>
<keyword id="KW-0436">Ligase</keyword>
<keyword id="KW-0479">Metal-binding</keyword>
<keyword id="KW-0547">Nucleotide-binding</keyword>
<keyword id="KW-0648">Protein biosynthesis</keyword>
<keyword id="KW-1185">Reference proteome</keyword>
<keyword id="KW-0862">Zinc</keyword>
<accession>C4LG04</accession>
<evidence type="ECO:0000255" key="1">
    <source>
        <dbReference type="HAMAP-Rule" id="MF_00041"/>
    </source>
</evidence>
<gene>
    <name evidence="1" type="primary">cysS</name>
    <name type="ordered locus">Tola_1918</name>
</gene>
<sequence length="463" mass="52139">MLKIYNTLTRQKEEFKPIHPGKVGMYVCGVTIYDLCHIGHGRTFVAFDVVVRYLRYLGYDVTFVRNITDVDDKIIKRAAENAESCDALTERLIGDMHADFDALKLQRPDIEPRATQHIGEIITLVQSLLDQNYAYVADSGDVLFSIDSFPEYGRLSGQNIEQLQAGARVDVEESKRNPMDFVLWKMSKPGEPMWDSPWGAGRPGWHIECSAMNSKHLGHHFDIHGGGSDLQFPHHENEIAQSCCAHHTPYVNTWMHSGMVMVDEEKMSKSLGNFFTIRDVLKVYDAETVRYFLMSGHYRSPLNYSDLNLQQARASLERLYTALRGVEDGEEQAALSAPFDERFKAAMDDDFNTPEAYSVLFDLARDLNRAKQDSPADAVALAACLRRLGGVLGLLQQQPEQFLQSGAAAETDDVAEIELLIKTRNDARASKNWALADEARNKLTEMGIVLEDGPQGTTWRRKG</sequence>
<feature type="chain" id="PRO_1000202135" description="Cysteine--tRNA ligase">
    <location>
        <begin position="1"/>
        <end position="463"/>
    </location>
</feature>
<feature type="short sequence motif" description="'HIGH' region">
    <location>
        <begin position="30"/>
        <end position="40"/>
    </location>
</feature>
<feature type="short sequence motif" description="'KMSKS' region">
    <location>
        <begin position="266"/>
        <end position="270"/>
    </location>
</feature>
<feature type="binding site" evidence="1">
    <location>
        <position position="28"/>
    </location>
    <ligand>
        <name>Zn(2+)</name>
        <dbReference type="ChEBI" id="CHEBI:29105"/>
    </ligand>
</feature>
<feature type="binding site" evidence="1">
    <location>
        <position position="209"/>
    </location>
    <ligand>
        <name>Zn(2+)</name>
        <dbReference type="ChEBI" id="CHEBI:29105"/>
    </ligand>
</feature>
<feature type="binding site" evidence="1">
    <location>
        <position position="234"/>
    </location>
    <ligand>
        <name>Zn(2+)</name>
        <dbReference type="ChEBI" id="CHEBI:29105"/>
    </ligand>
</feature>
<feature type="binding site" evidence="1">
    <location>
        <position position="238"/>
    </location>
    <ligand>
        <name>Zn(2+)</name>
        <dbReference type="ChEBI" id="CHEBI:29105"/>
    </ligand>
</feature>
<feature type="binding site" evidence="1">
    <location>
        <position position="269"/>
    </location>
    <ligand>
        <name>ATP</name>
        <dbReference type="ChEBI" id="CHEBI:30616"/>
    </ligand>
</feature>
<reference key="1">
    <citation type="submission" date="2009-05" db="EMBL/GenBank/DDBJ databases">
        <title>Complete sequence of Tolumonas auensis DSM 9187.</title>
        <authorList>
            <consortium name="US DOE Joint Genome Institute"/>
            <person name="Lucas S."/>
            <person name="Copeland A."/>
            <person name="Lapidus A."/>
            <person name="Glavina del Rio T."/>
            <person name="Tice H."/>
            <person name="Bruce D."/>
            <person name="Goodwin L."/>
            <person name="Pitluck S."/>
            <person name="Chertkov O."/>
            <person name="Brettin T."/>
            <person name="Detter J.C."/>
            <person name="Han C."/>
            <person name="Larimer F."/>
            <person name="Land M."/>
            <person name="Hauser L."/>
            <person name="Kyrpides N."/>
            <person name="Mikhailova N."/>
            <person name="Spring S."/>
            <person name="Beller H."/>
        </authorList>
    </citation>
    <scope>NUCLEOTIDE SEQUENCE [LARGE SCALE GENOMIC DNA]</scope>
    <source>
        <strain>DSM 9187 / NBRC 110442 / TA 4</strain>
    </source>
</reference>
<proteinExistence type="inferred from homology"/>